<reference key="1">
    <citation type="journal article" date="2005" name="Proc. Natl. Acad. Sci. U.S.A.">
        <title>The psychrophilic lifestyle as revealed by the genome sequence of Colwellia psychrerythraea 34H through genomic and proteomic analyses.</title>
        <authorList>
            <person name="Methe B.A."/>
            <person name="Nelson K.E."/>
            <person name="Deming J.W."/>
            <person name="Momen B."/>
            <person name="Melamud E."/>
            <person name="Zhang X."/>
            <person name="Moult J."/>
            <person name="Madupu R."/>
            <person name="Nelson W.C."/>
            <person name="Dodson R.J."/>
            <person name="Brinkac L.M."/>
            <person name="Daugherty S.C."/>
            <person name="Durkin A.S."/>
            <person name="DeBoy R.T."/>
            <person name="Kolonay J.F."/>
            <person name="Sullivan S.A."/>
            <person name="Zhou L."/>
            <person name="Davidsen T.M."/>
            <person name="Wu M."/>
            <person name="Huston A.L."/>
            <person name="Lewis M."/>
            <person name="Weaver B."/>
            <person name="Weidman J.F."/>
            <person name="Khouri H."/>
            <person name="Utterback T.R."/>
            <person name="Feldblyum T.V."/>
            <person name="Fraser C.M."/>
        </authorList>
    </citation>
    <scope>NUCLEOTIDE SEQUENCE [LARGE SCALE GENOMIC DNA]</scope>
    <source>
        <strain>34H / ATCC BAA-681</strain>
    </source>
</reference>
<sequence>MNSILRHNWNLKEVEALFAMPFNDLMFKAQTIHRENFNPNEVQVSTLLSIKTGACPEDCKYCSQSARNKTDLEKESLLAVEKVLEAAQRAKEMGSTRFCMGAAWRNPKERDMPYVLDMVKSVKALGMETCMTLGMLSGDQADQLNGAGLDYYNHNLDTSPEHYNQIITTRTFQDRLDTLSNVRSAGMKVCSGGIVGLGEKAVDRSSLLIQLANLNPQPESVPINMLVKVEGTPLADIDDLESFDFIRCIAVARIMMPHSHVRLSAGRTAMNEQMQAMCFLAGANSIFYGCKLLTAENPETNQDIALFEKLGINTETVAGDTERSDNIVKTAIVDQQNSDLFYNASA</sequence>
<protein>
    <recommendedName>
        <fullName evidence="1">Biotin synthase</fullName>
        <ecNumber evidence="1">2.8.1.6</ecNumber>
    </recommendedName>
</protein>
<name>BIOB_COLP3</name>
<proteinExistence type="inferred from homology"/>
<evidence type="ECO:0000255" key="1">
    <source>
        <dbReference type="HAMAP-Rule" id="MF_01694"/>
    </source>
</evidence>
<evidence type="ECO:0000255" key="2">
    <source>
        <dbReference type="PROSITE-ProRule" id="PRU01266"/>
    </source>
</evidence>
<evidence type="ECO:0000305" key="3"/>
<organism>
    <name type="scientific">Colwellia psychrerythraea (strain 34H / ATCC BAA-681)</name>
    <name type="common">Vibrio psychroerythus</name>
    <dbReference type="NCBI Taxonomy" id="167879"/>
    <lineage>
        <taxon>Bacteria</taxon>
        <taxon>Pseudomonadati</taxon>
        <taxon>Pseudomonadota</taxon>
        <taxon>Gammaproteobacteria</taxon>
        <taxon>Alteromonadales</taxon>
        <taxon>Colwelliaceae</taxon>
        <taxon>Colwellia</taxon>
    </lineage>
</organism>
<dbReference type="EC" id="2.8.1.6" evidence="1"/>
<dbReference type="EMBL" id="CP000083">
    <property type="protein sequence ID" value="AAZ25168.1"/>
    <property type="status" value="ALT_INIT"/>
    <property type="molecule type" value="Genomic_DNA"/>
</dbReference>
<dbReference type="SMR" id="Q481G0"/>
<dbReference type="STRING" id="167879.CPS_2594"/>
<dbReference type="KEGG" id="cps:CPS_2594"/>
<dbReference type="eggNOG" id="COG0502">
    <property type="taxonomic scope" value="Bacteria"/>
</dbReference>
<dbReference type="HOGENOM" id="CLU_033172_1_2_6"/>
<dbReference type="UniPathway" id="UPA00078">
    <property type="reaction ID" value="UER00162"/>
</dbReference>
<dbReference type="Proteomes" id="UP000000547">
    <property type="component" value="Chromosome"/>
</dbReference>
<dbReference type="GO" id="GO:0051537">
    <property type="term" value="F:2 iron, 2 sulfur cluster binding"/>
    <property type="evidence" value="ECO:0007669"/>
    <property type="project" value="UniProtKB-KW"/>
</dbReference>
<dbReference type="GO" id="GO:0051539">
    <property type="term" value="F:4 iron, 4 sulfur cluster binding"/>
    <property type="evidence" value="ECO:0007669"/>
    <property type="project" value="UniProtKB-KW"/>
</dbReference>
<dbReference type="GO" id="GO:0004076">
    <property type="term" value="F:biotin synthase activity"/>
    <property type="evidence" value="ECO:0007669"/>
    <property type="project" value="UniProtKB-UniRule"/>
</dbReference>
<dbReference type="GO" id="GO:0005506">
    <property type="term" value="F:iron ion binding"/>
    <property type="evidence" value="ECO:0007669"/>
    <property type="project" value="UniProtKB-UniRule"/>
</dbReference>
<dbReference type="GO" id="GO:0009102">
    <property type="term" value="P:biotin biosynthetic process"/>
    <property type="evidence" value="ECO:0007669"/>
    <property type="project" value="UniProtKB-UniRule"/>
</dbReference>
<dbReference type="CDD" id="cd01335">
    <property type="entry name" value="Radical_SAM"/>
    <property type="match status" value="1"/>
</dbReference>
<dbReference type="FunFam" id="3.20.20.70:FF:000011">
    <property type="entry name" value="Biotin synthase"/>
    <property type="match status" value="1"/>
</dbReference>
<dbReference type="Gene3D" id="3.20.20.70">
    <property type="entry name" value="Aldolase class I"/>
    <property type="match status" value="1"/>
</dbReference>
<dbReference type="HAMAP" id="MF_01694">
    <property type="entry name" value="BioB"/>
    <property type="match status" value="1"/>
</dbReference>
<dbReference type="InterPro" id="IPR013785">
    <property type="entry name" value="Aldolase_TIM"/>
</dbReference>
<dbReference type="InterPro" id="IPR010722">
    <property type="entry name" value="BATS_dom"/>
</dbReference>
<dbReference type="InterPro" id="IPR002684">
    <property type="entry name" value="Biotin_synth/BioAB"/>
</dbReference>
<dbReference type="InterPro" id="IPR024177">
    <property type="entry name" value="Biotin_synthase"/>
</dbReference>
<dbReference type="InterPro" id="IPR006638">
    <property type="entry name" value="Elp3/MiaA/NifB-like_rSAM"/>
</dbReference>
<dbReference type="InterPro" id="IPR007197">
    <property type="entry name" value="rSAM"/>
</dbReference>
<dbReference type="NCBIfam" id="TIGR00433">
    <property type="entry name" value="bioB"/>
    <property type="match status" value="1"/>
</dbReference>
<dbReference type="PANTHER" id="PTHR22976">
    <property type="entry name" value="BIOTIN SYNTHASE"/>
    <property type="match status" value="1"/>
</dbReference>
<dbReference type="PANTHER" id="PTHR22976:SF2">
    <property type="entry name" value="BIOTIN SYNTHASE, MITOCHONDRIAL"/>
    <property type="match status" value="1"/>
</dbReference>
<dbReference type="Pfam" id="PF06968">
    <property type="entry name" value="BATS"/>
    <property type="match status" value="1"/>
</dbReference>
<dbReference type="Pfam" id="PF04055">
    <property type="entry name" value="Radical_SAM"/>
    <property type="match status" value="1"/>
</dbReference>
<dbReference type="PIRSF" id="PIRSF001619">
    <property type="entry name" value="Biotin_synth"/>
    <property type="match status" value="1"/>
</dbReference>
<dbReference type="SFLD" id="SFLDF00272">
    <property type="entry name" value="biotin_synthase"/>
    <property type="match status" value="1"/>
</dbReference>
<dbReference type="SFLD" id="SFLDG01278">
    <property type="entry name" value="biotin_synthase_like"/>
    <property type="match status" value="1"/>
</dbReference>
<dbReference type="SMART" id="SM00876">
    <property type="entry name" value="BATS"/>
    <property type="match status" value="1"/>
</dbReference>
<dbReference type="SMART" id="SM00729">
    <property type="entry name" value="Elp3"/>
    <property type="match status" value="1"/>
</dbReference>
<dbReference type="SUPFAM" id="SSF102114">
    <property type="entry name" value="Radical SAM enzymes"/>
    <property type="match status" value="1"/>
</dbReference>
<dbReference type="PROSITE" id="PS51918">
    <property type="entry name" value="RADICAL_SAM"/>
    <property type="match status" value="1"/>
</dbReference>
<comment type="function">
    <text evidence="1">Catalyzes the conversion of dethiobiotin (DTB) to biotin by the insertion of a sulfur atom into dethiobiotin via a radical-based mechanism.</text>
</comment>
<comment type="catalytic activity">
    <reaction evidence="1">
        <text>(4R,5S)-dethiobiotin + (sulfur carrier)-SH + 2 reduced [2Fe-2S]-[ferredoxin] + 2 S-adenosyl-L-methionine = (sulfur carrier)-H + biotin + 2 5'-deoxyadenosine + 2 L-methionine + 2 oxidized [2Fe-2S]-[ferredoxin]</text>
        <dbReference type="Rhea" id="RHEA:22060"/>
        <dbReference type="Rhea" id="RHEA-COMP:10000"/>
        <dbReference type="Rhea" id="RHEA-COMP:10001"/>
        <dbReference type="Rhea" id="RHEA-COMP:14737"/>
        <dbReference type="Rhea" id="RHEA-COMP:14739"/>
        <dbReference type="ChEBI" id="CHEBI:17319"/>
        <dbReference type="ChEBI" id="CHEBI:29917"/>
        <dbReference type="ChEBI" id="CHEBI:33737"/>
        <dbReference type="ChEBI" id="CHEBI:33738"/>
        <dbReference type="ChEBI" id="CHEBI:57586"/>
        <dbReference type="ChEBI" id="CHEBI:57844"/>
        <dbReference type="ChEBI" id="CHEBI:59789"/>
        <dbReference type="ChEBI" id="CHEBI:64428"/>
        <dbReference type="ChEBI" id="CHEBI:149473"/>
        <dbReference type="EC" id="2.8.1.6"/>
    </reaction>
</comment>
<comment type="cofactor">
    <cofactor evidence="1">
        <name>[4Fe-4S] cluster</name>
        <dbReference type="ChEBI" id="CHEBI:49883"/>
    </cofactor>
    <text evidence="1">Binds 1 [4Fe-4S] cluster. The cluster is coordinated with 3 cysteines and an exchangeable S-adenosyl-L-methionine.</text>
</comment>
<comment type="cofactor">
    <cofactor evidence="1">
        <name>[2Fe-2S] cluster</name>
        <dbReference type="ChEBI" id="CHEBI:190135"/>
    </cofactor>
    <text evidence="1">Binds 1 [2Fe-2S] cluster. The cluster is coordinated with 3 cysteines and 1 arginine.</text>
</comment>
<comment type="pathway">
    <text evidence="1">Cofactor biosynthesis; biotin biosynthesis; biotin from 7,8-diaminononanoate: step 2/2.</text>
</comment>
<comment type="subunit">
    <text evidence="1">Homodimer.</text>
</comment>
<comment type="similarity">
    <text evidence="1">Belongs to the radical SAM superfamily. Biotin synthase family.</text>
</comment>
<comment type="sequence caution" evidence="3">
    <conflict type="erroneous initiation">
        <sequence resource="EMBL-CDS" id="AAZ25168"/>
    </conflict>
</comment>
<accession>Q481G0</accession>
<keyword id="KW-0001">2Fe-2S</keyword>
<keyword id="KW-0004">4Fe-4S</keyword>
<keyword id="KW-0093">Biotin biosynthesis</keyword>
<keyword id="KW-0408">Iron</keyword>
<keyword id="KW-0411">Iron-sulfur</keyword>
<keyword id="KW-0479">Metal-binding</keyword>
<keyword id="KW-0949">S-adenosyl-L-methionine</keyword>
<keyword id="KW-0808">Transferase</keyword>
<gene>
    <name evidence="1" type="primary">bioB</name>
    <name type="ordered locus">CPS_2594</name>
</gene>
<feature type="chain" id="PRO_0000381324" description="Biotin synthase">
    <location>
        <begin position="1"/>
        <end position="346"/>
    </location>
</feature>
<feature type="domain" description="Radical SAM core" evidence="2">
    <location>
        <begin position="40"/>
        <end position="264"/>
    </location>
</feature>
<feature type="binding site" evidence="1">
    <location>
        <position position="55"/>
    </location>
    <ligand>
        <name>[4Fe-4S] cluster</name>
        <dbReference type="ChEBI" id="CHEBI:49883"/>
        <note>4Fe-4S-S-AdoMet</note>
    </ligand>
</feature>
<feature type="binding site" evidence="1">
    <location>
        <position position="59"/>
    </location>
    <ligand>
        <name>[4Fe-4S] cluster</name>
        <dbReference type="ChEBI" id="CHEBI:49883"/>
        <note>4Fe-4S-S-AdoMet</note>
    </ligand>
</feature>
<feature type="binding site" evidence="1">
    <location>
        <position position="62"/>
    </location>
    <ligand>
        <name>[4Fe-4S] cluster</name>
        <dbReference type="ChEBI" id="CHEBI:49883"/>
        <note>4Fe-4S-S-AdoMet</note>
    </ligand>
</feature>
<feature type="binding site" evidence="1">
    <location>
        <position position="99"/>
    </location>
    <ligand>
        <name>[2Fe-2S] cluster</name>
        <dbReference type="ChEBI" id="CHEBI:190135"/>
    </ligand>
</feature>
<feature type="binding site" evidence="1">
    <location>
        <position position="130"/>
    </location>
    <ligand>
        <name>[2Fe-2S] cluster</name>
        <dbReference type="ChEBI" id="CHEBI:190135"/>
    </ligand>
</feature>
<feature type="binding site" evidence="1">
    <location>
        <position position="190"/>
    </location>
    <ligand>
        <name>[2Fe-2S] cluster</name>
        <dbReference type="ChEBI" id="CHEBI:190135"/>
    </ligand>
</feature>
<feature type="binding site" evidence="1">
    <location>
        <position position="262"/>
    </location>
    <ligand>
        <name>[2Fe-2S] cluster</name>
        <dbReference type="ChEBI" id="CHEBI:190135"/>
    </ligand>
</feature>